<protein>
    <recommendedName>
        <fullName evidence="1">ATP synthase subunit delta</fullName>
    </recommendedName>
    <alternativeName>
        <fullName evidence="1">ATP synthase F(1) sector subunit delta</fullName>
    </alternativeName>
    <alternativeName>
        <fullName evidence="1">F-type ATPase subunit delta</fullName>
        <shortName evidence="1">F-ATPase subunit delta</shortName>
    </alternativeName>
</protein>
<feature type="chain" id="PRO_1000184752" description="ATP synthase subunit delta">
    <location>
        <begin position="1"/>
        <end position="190"/>
    </location>
</feature>
<proteinExistence type="inferred from homology"/>
<dbReference type="EMBL" id="CP001349">
    <property type="protein sequence ID" value="ACL62120.1"/>
    <property type="molecule type" value="Genomic_DNA"/>
</dbReference>
<dbReference type="RefSeq" id="WP_015933678.1">
    <property type="nucleotide sequence ID" value="NC_011894.1"/>
</dbReference>
<dbReference type="SMR" id="B8IN04"/>
<dbReference type="STRING" id="460265.Mnod_7383"/>
<dbReference type="KEGG" id="mno:Mnod_7383"/>
<dbReference type="eggNOG" id="COG0712">
    <property type="taxonomic scope" value="Bacteria"/>
</dbReference>
<dbReference type="HOGENOM" id="CLU_085114_0_1_5"/>
<dbReference type="OrthoDB" id="9796185at2"/>
<dbReference type="Proteomes" id="UP000008207">
    <property type="component" value="Chromosome"/>
</dbReference>
<dbReference type="GO" id="GO:0005886">
    <property type="term" value="C:plasma membrane"/>
    <property type="evidence" value="ECO:0007669"/>
    <property type="project" value="UniProtKB-SubCell"/>
</dbReference>
<dbReference type="GO" id="GO:0045259">
    <property type="term" value="C:proton-transporting ATP synthase complex"/>
    <property type="evidence" value="ECO:0007669"/>
    <property type="project" value="UniProtKB-KW"/>
</dbReference>
<dbReference type="GO" id="GO:0046933">
    <property type="term" value="F:proton-transporting ATP synthase activity, rotational mechanism"/>
    <property type="evidence" value="ECO:0007669"/>
    <property type="project" value="UniProtKB-UniRule"/>
</dbReference>
<dbReference type="Gene3D" id="1.10.520.20">
    <property type="entry name" value="N-terminal domain of the delta subunit of the F1F0-ATP synthase"/>
    <property type="match status" value="1"/>
</dbReference>
<dbReference type="HAMAP" id="MF_01416">
    <property type="entry name" value="ATP_synth_delta_bact"/>
    <property type="match status" value="1"/>
</dbReference>
<dbReference type="InterPro" id="IPR026015">
    <property type="entry name" value="ATP_synth_OSCP/delta_N_sf"/>
</dbReference>
<dbReference type="InterPro" id="IPR020781">
    <property type="entry name" value="ATPase_OSCP/d_CS"/>
</dbReference>
<dbReference type="InterPro" id="IPR000711">
    <property type="entry name" value="ATPase_OSCP/dsu"/>
</dbReference>
<dbReference type="NCBIfam" id="TIGR01145">
    <property type="entry name" value="ATP_synt_delta"/>
    <property type="match status" value="1"/>
</dbReference>
<dbReference type="NCBIfam" id="NF004406">
    <property type="entry name" value="PRK05758.3-2"/>
    <property type="match status" value="1"/>
</dbReference>
<dbReference type="PANTHER" id="PTHR11910">
    <property type="entry name" value="ATP SYNTHASE DELTA CHAIN"/>
    <property type="match status" value="1"/>
</dbReference>
<dbReference type="Pfam" id="PF00213">
    <property type="entry name" value="OSCP"/>
    <property type="match status" value="1"/>
</dbReference>
<dbReference type="PRINTS" id="PR00125">
    <property type="entry name" value="ATPASEDELTA"/>
</dbReference>
<dbReference type="SUPFAM" id="SSF47928">
    <property type="entry name" value="N-terminal domain of the delta subunit of the F1F0-ATP synthase"/>
    <property type="match status" value="1"/>
</dbReference>
<dbReference type="PROSITE" id="PS00389">
    <property type="entry name" value="ATPASE_DELTA"/>
    <property type="match status" value="1"/>
</dbReference>
<organism>
    <name type="scientific">Methylobacterium nodulans (strain LMG 21967 / CNCM I-2342 / ORS 2060)</name>
    <dbReference type="NCBI Taxonomy" id="460265"/>
    <lineage>
        <taxon>Bacteria</taxon>
        <taxon>Pseudomonadati</taxon>
        <taxon>Pseudomonadota</taxon>
        <taxon>Alphaproteobacteria</taxon>
        <taxon>Hyphomicrobiales</taxon>
        <taxon>Methylobacteriaceae</taxon>
        <taxon>Methylobacterium</taxon>
    </lineage>
</organism>
<comment type="function">
    <text evidence="1">F(1)F(0) ATP synthase produces ATP from ADP in the presence of a proton or sodium gradient. F-type ATPases consist of two structural domains, F(1) containing the extramembraneous catalytic core and F(0) containing the membrane proton channel, linked together by a central stalk and a peripheral stalk. During catalysis, ATP synthesis in the catalytic domain of F(1) is coupled via a rotary mechanism of the central stalk subunits to proton translocation.</text>
</comment>
<comment type="function">
    <text evidence="1">This protein is part of the stalk that links CF(0) to CF(1). It either transmits conformational changes from CF(0) to CF(1) or is implicated in proton conduction.</text>
</comment>
<comment type="subunit">
    <text evidence="1">F-type ATPases have 2 components, F(1) - the catalytic core - and F(0) - the membrane proton channel. F(1) has five subunits: alpha(3), beta(3), gamma(1), delta(1), epsilon(1). F(0) has three main subunits: a(1), b(2) and c(10-14). The alpha and beta chains form an alternating ring which encloses part of the gamma chain. F(1) is attached to F(0) by a central stalk formed by the gamma and epsilon chains, while a peripheral stalk is formed by the delta and b chains.</text>
</comment>
<comment type="subcellular location">
    <subcellularLocation>
        <location evidence="1">Cell inner membrane</location>
        <topology evidence="1">Peripheral membrane protein</topology>
    </subcellularLocation>
</comment>
<comment type="similarity">
    <text evidence="1">Belongs to the ATPase delta chain family.</text>
</comment>
<accession>B8IN04</accession>
<name>ATPD_METNO</name>
<reference key="1">
    <citation type="submission" date="2009-01" db="EMBL/GenBank/DDBJ databases">
        <title>Complete sequence of chromosome of Methylobacterium nodulans ORS 2060.</title>
        <authorList>
            <consortium name="US DOE Joint Genome Institute"/>
            <person name="Lucas S."/>
            <person name="Copeland A."/>
            <person name="Lapidus A."/>
            <person name="Glavina del Rio T."/>
            <person name="Dalin E."/>
            <person name="Tice H."/>
            <person name="Bruce D."/>
            <person name="Goodwin L."/>
            <person name="Pitluck S."/>
            <person name="Sims D."/>
            <person name="Brettin T."/>
            <person name="Detter J.C."/>
            <person name="Han C."/>
            <person name="Larimer F."/>
            <person name="Land M."/>
            <person name="Hauser L."/>
            <person name="Kyrpides N."/>
            <person name="Ivanova N."/>
            <person name="Marx C.J."/>
            <person name="Richardson P."/>
        </authorList>
    </citation>
    <scope>NUCLEOTIDE SEQUENCE [LARGE SCALE GENOMIC DNA]</scope>
    <source>
        <strain>LMG 21967 / CNCM I-2342 / ORS 2060</strain>
    </source>
</reference>
<gene>
    <name evidence="1" type="primary">atpH</name>
    <name type="ordered locus">Mnod_7383</name>
</gene>
<sequence>MAQNGSESGSTLGGVAGRYASALFELAREERAVDAVSEGLDRFDALLKESADLQRLVRSPVFTSEDQVKAIDAVLARAGITGLAANFIRLSAANRRLFVLPDMIRAFRALVRESKGIVQAEVRLAETPSDAVLEEIKASLRDVARAEVDVDLRIDPSLIGGIVVKVGSRMVDASLRTKLNSIRLAMRDAR</sequence>
<evidence type="ECO:0000255" key="1">
    <source>
        <dbReference type="HAMAP-Rule" id="MF_01416"/>
    </source>
</evidence>
<keyword id="KW-0066">ATP synthesis</keyword>
<keyword id="KW-0997">Cell inner membrane</keyword>
<keyword id="KW-1003">Cell membrane</keyword>
<keyword id="KW-0139">CF(1)</keyword>
<keyword id="KW-0375">Hydrogen ion transport</keyword>
<keyword id="KW-0406">Ion transport</keyword>
<keyword id="KW-0472">Membrane</keyword>
<keyword id="KW-1185">Reference proteome</keyword>
<keyword id="KW-0813">Transport</keyword>